<gene>
    <name type="primary">tufA</name>
</gene>
<protein>
    <recommendedName>
        <fullName>Elongation factor Tu, chloroplastic</fullName>
        <shortName>EF-Tu</shortName>
        <ecNumber evidence="2">3.6.5.3</ecNumber>
    </recommendedName>
</protein>
<accession>Q8M9W7</accession>
<sequence>MNIFRDKKTHINIATIGHFNHGKTTLSAAIAMTLANKKYRLDKKSIKVTLEEKNQGIGIYTHHFQYETTLRHYSHTDCPGHTDYINNMIAGISQVDSTILVVSAVDGSMSQTKEHLLIAKLLGISSFIVFINKEDQLDDDKFVYLVQKEISQFLMSHGFQTNKIPIVSGSALLALETLIQQPNVLRGENYWVDKIYTLIELLDSYIPKPKRKKDKHFLMWIDSVKFLPNIGPIAMGRIEQGTIKVGEFIDIVGFRETRTAKIISLEFFNQSCMQVLAGDDIGVSIEGTKNHNDIKKGMIISTPGTIKSWLEFEAQVYILKREEGGRTSPFFKGYCPQFFFKTTCVTGRIEAIEYTTGSKTWMIMPGDKLKIQVNLVYPIGIKKRMRFLIREGGVLVGVGIISNLIK</sequence>
<dbReference type="EC" id="3.6.5.3" evidence="2"/>
<dbReference type="EMBL" id="AF494278">
    <property type="protein sequence ID" value="AAM96580.1"/>
    <property type="molecule type" value="Genomic_DNA"/>
</dbReference>
<dbReference type="RefSeq" id="NP_683822.1">
    <property type="nucleotide sequence ID" value="NC_004115.1"/>
</dbReference>
<dbReference type="SMR" id="Q8M9W7"/>
<dbReference type="GeneID" id="860736"/>
<dbReference type="GO" id="GO:0009507">
    <property type="term" value="C:chloroplast"/>
    <property type="evidence" value="ECO:0007669"/>
    <property type="project" value="UniProtKB-SubCell"/>
</dbReference>
<dbReference type="GO" id="GO:0005739">
    <property type="term" value="C:mitochondrion"/>
    <property type="evidence" value="ECO:0007669"/>
    <property type="project" value="TreeGrafter"/>
</dbReference>
<dbReference type="GO" id="GO:0005525">
    <property type="term" value="F:GTP binding"/>
    <property type="evidence" value="ECO:0007669"/>
    <property type="project" value="UniProtKB-KW"/>
</dbReference>
<dbReference type="GO" id="GO:0003924">
    <property type="term" value="F:GTPase activity"/>
    <property type="evidence" value="ECO:0007669"/>
    <property type="project" value="InterPro"/>
</dbReference>
<dbReference type="GO" id="GO:0003746">
    <property type="term" value="F:translation elongation factor activity"/>
    <property type="evidence" value="ECO:0007669"/>
    <property type="project" value="UniProtKB-KW"/>
</dbReference>
<dbReference type="GO" id="GO:0070125">
    <property type="term" value="P:mitochondrial translational elongation"/>
    <property type="evidence" value="ECO:0007669"/>
    <property type="project" value="TreeGrafter"/>
</dbReference>
<dbReference type="CDD" id="cd01884">
    <property type="entry name" value="EF_Tu"/>
    <property type="match status" value="1"/>
</dbReference>
<dbReference type="CDD" id="cd03697">
    <property type="entry name" value="EFTU_II"/>
    <property type="match status" value="1"/>
</dbReference>
<dbReference type="CDD" id="cd03707">
    <property type="entry name" value="EFTU_III"/>
    <property type="match status" value="1"/>
</dbReference>
<dbReference type="FunFam" id="2.40.30.10:FF:000001">
    <property type="entry name" value="Elongation factor Tu"/>
    <property type="match status" value="1"/>
</dbReference>
<dbReference type="Gene3D" id="3.40.50.300">
    <property type="entry name" value="P-loop containing nucleotide triphosphate hydrolases"/>
    <property type="match status" value="1"/>
</dbReference>
<dbReference type="Gene3D" id="2.40.30.10">
    <property type="entry name" value="Translation factors"/>
    <property type="match status" value="2"/>
</dbReference>
<dbReference type="InterPro" id="IPR041709">
    <property type="entry name" value="EF-Tu_GTP-bd"/>
</dbReference>
<dbReference type="InterPro" id="IPR050055">
    <property type="entry name" value="EF-Tu_GTPase"/>
</dbReference>
<dbReference type="InterPro" id="IPR004161">
    <property type="entry name" value="EFTu-like_2"/>
</dbReference>
<dbReference type="InterPro" id="IPR033720">
    <property type="entry name" value="EFTU_2"/>
</dbReference>
<dbReference type="InterPro" id="IPR027417">
    <property type="entry name" value="P-loop_NTPase"/>
</dbReference>
<dbReference type="InterPro" id="IPR000795">
    <property type="entry name" value="T_Tr_GTP-bd_dom"/>
</dbReference>
<dbReference type="InterPro" id="IPR009000">
    <property type="entry name" value="Transl_B-barrel_sf"/>
</dbReference>
<dbReference type="InterPro" id="IPR009001">
    <property type="entry name" value="Transl_elong_EF1A/Init_IF2_C"/>
</dbReference>
<dbReference type="InterPro" id="IPR004160">
    <property type="entry name" value="Transl_elong_EFTu/EF1A_C"/>
</dbReference>
<dbReference type="PANTHER" id="PTHR43721:SF5">
    <property type="entry name" value="ELONGATION FACTOR TU, CHLOROPLASTIC"/>
    <property type="match status" value="1"/>
</dbReference>
<dbReference type="PANTHER" id="PTHR43721">
    <property type="entry name" value="ELONGATION FACTOR TU-RELATED"/>
    <property type="match status" value="1"/>
</dbReference>
<dbReference type="Pfam" id="PF00009">
    <property type="entry name" value="GTP_EFTU"/>
    <property type="match status" value="1"/>
</dbReference>
<dbReference type="Pfam" id="PF03144">
    <property type="entry name" value="GTP_EFTU_D2"/>
    <property type="match status" value="1"/>
</dbReference>
<dbReference type="Pfam" id="PF03143">
    <property type="entry name" value="GTP_EFTU_D3"/>
    <property type="match status" value="1"/>
</dbReference>
<dbReference type="PRINTS" id="PR00315">
    <property type="entry name" value="ELONGATNFCT"/>
</dbReference>
<dbReference type="SUPFAM" id="SSF50465">
    <property type="entry name" value="EF-Tu/eEF-1alpha/eIF2-gamma C-terminal domain"/>
    <property type="match status" value="1"/>
</dbReference>
<dbReference type="SUPFAM" id="SSF52540">
    <property type="entry name" value="P-loop containing nucleoside triphosphate hydrolases"/>
    <property type="match status" value="1"/>
</dbReference>
<dbReference type="SUPFAM" id="SSF50447">
    <property type="entry name" value="Translation proteins"/>
    <property type="match status" value="1"/>
</dbReference>
<dbReference type="PROSITE" id="PS51722">
    <property type="entry name" value="G_TR_2"/>
    <property type="match status" value="1"/>
</dbReference>
<reference key="1">
    <citation type="journal article" date="2002" name="Proc. Natl. Acad. Sci. U.S.A.">
        <title>The chloroplast and mitochondrial genome sequences of the charophyte Chaetosphaeridium globosum: insights into the timing of the events that restructured organelle DNAs within the green algal lineage that led to land plants.</title>
        <authorList>
            <person name="Turmel M."/>
            <person name="Otis C."/>
            <person name="Lemieux C."/>
        </authorList>
    </citation>
    <scope>NUCLEOTIDE SEQUENCE [LARGE SCALE GENOMIC DNA]</scope>
</reference>
<comment type="function">
    <text evidence="2">GTP hydrolase that promotes the GTP-dependent binding of aminoacyl-tRNA to the A-site of ribosomes during protein biosynthesis.</text>
</comment>
<comment type="catalytic activity">
    <reaction evidence="2">
        <text>GTP + H2O = GDP + phosphate + H(+)</text>
        <dbReference type="Rhea" id="RHEA:19669"/>
        <dbReference type="ChEBI" id="CHEBI:15377"/>
        <dbReference type="ChEBI" id="CHEBI:15378"/>
        <dbReference type="ChEBI" id="CHEBI:37565"/>
        <dbReference type="ChEBI" id="CHEBI:43474"/>
        <dbReference type="ChEBI" id="CHEBI:58189"/>
        <dbReference type="EC" id="3.6.5.3"/>
    </reaction>
    <physiologicalReaction direction="left-to-right" evidence="2">
        <dbReference type="Rhea" id="RHEA:19670"/>
    </physiologicalReaction>
</comment>
<comment type="subunit">
    <text evidence="1">Monomer.</text>
</comment>
<comment type="subcellular location">
    <subcellularLocation>
        <location>Plastid</location>
        <location>Chloroplast</location>
    </subcellularLocation>
</comment>
<comment type="similarity">
    <text evidence="3">Belongs to the TRAFAC class translation factor GTPase superfamily. Classic translation factor GTPase family. EF-Tu/EF-1A subfamily.</text>
</comment>
<proteinExistence type="inferred from homology"/>
<keyword id="KW-0150">Chloroplast</keyword>
<keyword id="KW-0251">Elongation factor</keyword>
<keyword id="KW-0342">GTP-binding</keyword>
<keyword id="KW-0378">Hydrolase</keyword>
<keyword id="KW-0460">Magnesium</keyword>
<keyword id="KW-0479">Metal-binding</keyword>
<keyword id="KW-0547">Nucleotide-binding</keyword>
<keyword id="KW-0934">Plastid</keyword>
<keyword id="KW-0648">Protein biosynthesis</keyword>
<organism>
    <name type="scientific">Chaetosphaeridium globosum</name>
    <name type="common">Charophycean green alga</name>
    <name type="synonym">Herposteiron globosum</name>
    <dbReference type="NCBI Taxonomy" id="96477"/>
    <lineage>
        <taxon>Eukaryota</taxon>
        <taxon>Viridiplantae</taxon>
        <taxon>Streptophyta</taxon>
        <taxon>Coleochaetophyceae</taxon>
        <taxon>Coleochaetales</taxon>
        <taxon>Chaetosphaeridiaceae</taxon>
        <taxon>Chaetosphaeridium</taxon>
    </lineage>
</organism>
<evidence type="ECO:0000250" key="1"/>
<evidence type="ECO:0000255" key="2">
    <source>
        <dbReference type="HAMAP-Rule" id="MF_00118"/>
    </source>
</evidence>
<evidence type="ECO:0000255" key="3">
    <source>
        <dbReference type="PROSITE-ProRule" id="PRU01059"/>
    </source>
</evidence>
<name>EFTU_CHAGL</name>
<feature type="chain" id="PRO_0000337593" description="Elongation factor Tu, chloroplastic">
    <location>
        <begin position="1"/>
        <end position="406"/>
    </location>
</feature>
<feature type="domain" description="tr-type G" evidence="3">
    <location>
        <begin position="8"/>
        <end position="210"/>
    </location>
</feature>
<feature type="binding site" evidence="1">
    <location>
        <begin position="17"/>
        <end position="24"/>
    </location>
    <ligand>
        <name>GTP</name>
        <dbReference type="ChEBI" id="CHEBI:37565"/>
    </ligand>
</feature>
<feature type="binding site" evidence="2">
    <location>
        <position position="24"/>
    </location>
    <ligand>
        <name>Mg(2+)</name>
        <dbReference type="ChEBI" id="CHEBI:18420"/>
    </ligand>
</feature>
<feature type="binding site" evidence="1">
    <location>
        <begin position="77"/>
        <end position="81"/>
    </location>
    <ligand>
        <name>GTP</name>
        <dbReference type="ChEBI" id="CHEBI:37565"/>
    </ligand>
</feature>
<feature type="binding site" evidence="1">
    <location>
        <begin position="132"/>
        <end position="135"/>
    </location>
    <ligand>
        <name>GTP</name>
        <dbReference type="ChEBI" id="CHEBI:37565"/>
    </ligand>
</feature>
<geneLocation type="chloroplast"/>